<accession>Q9Z3R4</accession>
<dbReference type="EMBL" id="AF045609">
    <property type="protein sequence ID" value="AAD12051.1"/>
    <property type="molecule type" value="Genomic_DNA"/>
</dbReference>
<dbReference type="EMBL" id="AL591688">
    <property type="protein sequence ID" value="CAC45266.1"/>
    <property type="molecule type" value="Genomic_DNA"/>
</dbReference>
<dbReference type="RefSeq" id="NP_384800.1">
    <property type="nucleotide sequence ID" value="NC_003047.1"/>
</dbReference>
<dbReference type="RefSeq" id="WP_010968755.1">
    <property type="nucleotide sequence ID" value="NC_003047.1"/>
</dbReference>
<dbReference type="SMR" id="Q9Z3R4"/>
<dbReference type="EnsemblBacteria" id="CAC45266">
    <property type="protein sequence ID" value="CAC45266"/>
    <property type="gene ID" value="SMc03060"/>
</dbReference>
<dbReference type="KEGG" id="sme:SMc03060"/>
<dbReference type="PATRIC" id="fig|266834.11.peg.2068"/>
<dbReference type="eggNOG" id="COG1609">
    <property type="taxonomic scope" value="Bacteria"/>
</dbReference>
<dbReference type="HOGENOM" id="CLU_037628_6_1_5"/>
<dbReference type="OrthoDB" id="234496at2"/>
<dbReference type="Proteomes" id="UP000001976">
    <property type="component" value="Chromosome"/>
</dbReference>
<dbReference type="GO" id="GO:0003700">
    <property type="term" value="F:DNA-binding transcription factor activity"/>
    <property type="evidence" value="ECO:0007669"/>
    <property type="project" value="TreeGrafter"/>
</dbReference>
<dbReference type="GO" id="GO:0000976">
    <property type="term" value="F:transcription cis-regulatory region binding"/>
    <property type="evidence" value="ECO:0007669"/>
    <property type="project" value="TreeGrafter"/>
</dbReference>
<dbReference type="CDD" id="cd01392">
    <property type="entry name" value="HTH_LacI"/>
    <property type="match status" value="1"/>
</dbReference>
<dbReference type="CDD" id="cd20010">
    <property type="entry name" value="PBP1_AglR-like"/>
    <property type="match status" value="1"/>
</dbReference>
<dbReference type="Gene3D" id="3.40.50.2300">
    <property type="match status" value="2"/>
</dbReference>
<dbReference type="Gene3D" id="1.10.260.40">
    <property type="entry name" value="lambda repressor-like DNA-binding domains"/>
    <property type="match status" value="1"/>
</dbReference>
<dbReference type="InterPro" id="IPR000843">
    <property type="entry name" value="HTH_LacI"/>
</dbReference>
<dbReference type="InterPro" id="IPR046335">
    <property type="entry name" value="LacI/GalR-like_sensor"/>
</dbReference>
<dbReference type="InterPro" id="IPR010982">
    <property type="entry name" value="Lambda_DNA-bd_dom_sf"/>
</dbReference>
<dbReference type="InterPro" id="IPR028082">
    <property type="entry name" value="Peripla_BP_I"/>
</dbReference>
<dbReference type="PANTHER" id="PTHR30146:SF109">
    <property type="entry name" value="HTH-TYPE TRANSCRIPTIONAL REGULATOR GALS"/>
    <property type="match status" value="1"/>
</dbReference>
<dbReference type="PANTHER" id="PTHR30146">
    <property type="entry name" value="LACI-RELATED TRANSCRIPTIONAL REPRESSOR"/>
    <property type="match status" value="1"/>
</dbReference>
<dbReference type="Pfam" id="PF00356">
    <property type="entry name" value="LacI"/>
    <property type="match status" value="1"/>
</dbReference>
<dbReference type="Pfam" id="PF13377">
    <property type="entry name" value="Peripla_BP_3"/>
    <property type="match status" value="1"/>
</dbReference>
<dbReference type="SMART" id="SM00354">
    <property type="entry name" value="HTH_LACI"/>
    <property type="match status" value="1"/>
</dbReference>
<dbReference type="SUPFAM" id="SSF47413">
    <property type="entry name" value="lambda repressor-like DNA-binding domains"/>
    <property type="match status" value="1"/>
</dbReference>
<dbReference type="SUPFAM" id="SSF53822">
    <property type="entry name" value="Periplasmic binding protein-like I"/>
    <property type="match status" value="1"/>
</dbReference>
<dbReference type="PROSITE" id="PS50932">
    <property type="entry name" value="HTH_LACI_2"/>
    <property type="match status" value="1"/>
</dbReference>
<name>AGLR_RHIME</name>
<evidence type="ECO:0000255" key="1">
    <source>
        <dbReference type="PROSITE-ProRule" id="PRU00111"/>
    </source>
</evidence>
<evidence type="ECO:0000256" key="2">
    <source>
        <dbReference type="SAM" id="MobiDB-lite"/>
    </source>
</evidence>
<evidence type="ECO:0000305" key="3"/>
<protein>
    <recommendedName>
        <fullName>HTH-type transcriptional regulator AglR</fullName>
    </recommendedName>
</protein>
<proteinExistence type="predicted"/>
<comment type="function">
    <text>Probable regulatory protein for the binding-protein-dependent transport system for alpha-glucosides such as sucrose, maltose and trehalose.</text>
</comment>
<keyword id="KW-0238">DNA-binding</keyword>
<keyword id="KW-1185">Reference proteome</keyword>
<keyword id="KW-0804">Transcription</keyword>
<keyword id="KW-0805">Transcription regulation</keyword>
<gene>
    <name type="primary">aglR</name>
    <name type="ordered locus">R00694</name>
    <name type="ORF">SMc03060</name>
</gene>
<feature type="chain" id="PRO_0000107922" description="HTH-type transcriptional regulator AglR">
    <location>
        <begin position="1"/>
        <end position="356"/>
    </location>
</feature>
<feature type="domain" description="HTH lacI-type" evidence="1">
    <location>
        <begin position="1"/>
        <end position="57"/>
    </location>
</feature>
<feature type="DNA-binding region" description="H-T-H motif" evidence="1">
    <location>
        <begin position="5"/>
        <end position="24"/>
    </location>
</feature>
<feature type="region of interest" description="Disordered" evidence="2">
    <location>
        <begin position="337"/>
        <end position="356"/>
    </location>
</feature>
<feature type="sequence conflict" description="In Ref. 1; AAD12051." evidence="3" ref="1">
    <original>R</original>
    <variation>P</variation>
    <location>
        <position position="310"/>
    </location>
</feature>
<feature type="sequence conflict" description="In Ref. 1; AAD12051." evidence="3" ref="1">
    <original>W</original>
    <variation>G</variation>
    <location>
        <position position="327"/>
    </location>
</feature>
<feature type="sequence conflict" description="In Ref. 1; AAD12051." evidence="3" ref="1">
    <location>
        <begin position="342"/>
        <end position="356"/>
    </location>
</feature>
<reference key="1">
    <citation type="journal article" date="1999" name="J. Bacteriol.">
        <title>A novel Sinorhizobium meliloti operon encodes an alpha-glucosidase and a periplasmic-binding-protein-dependent transport system for alpha-glucosides.</title>
        <authorList>
            <person name="Willis L.B."/>
            <person name="Walker G.C."/>
        </authorList>
    </citation>
    <scope>NUCLEOTIDE SEQUENCE [GENOMIC DNA]</scope>
    <source>
        <strain>1021</strain>
    </source>
</reference>
<reference key="2">
    <citation type="journal article" date="2001" name="Proc. Natl. Acad. Sci. U.S.A.">
        <title>Analysis of the chromosome sequence of the legume symbiont Sinorhizobium meliloti strain 1021.</title>
        <authorList>
            <person name="Capela D."/>
            <person name="Barloy-Hubler F."/>
            <person name="Gouzy J."/>
            <person name="Bothe G."/>
            <person name="Ampe F."/>
            <person name="Batut J."/>
            <person name="Boistard P."/>
            <person name="Becker A."/>
            <person name="Boutry M."/>
            <person name="Cadieu E."/>
            <person name="Dreano S."/>
            <person name="Gloux S."/>
            <person name="Godrie T."/>
            <person name="Goffeau A."/>
            <person name="Kahn D."/>
            <person name="Kiss E."/>
            <person name="Lelaure V."/>
            <person name="Masuy D."/>
            <person name="Pohl T."/>
            <person name="Portetelle D."/>
            <person name="Puehler A."/>
            <person name="Purnelle B."/>
            <person name="Ramsperger U."/>
            <person name="Renard C."/>
            <person name="Thebault P."/>
            <person name="Vandenbol M."/>
            <person name="Weidner S."/>
            <person name="Galibert F."/>
        </authorList>
    </citation>
    <scope>NUCLEOTIDE SEQUENCE [LARGE SCALE GENOMIC DNA]</scope>
    <source>
        <strain>1021</strain>
    </source>
</reference>
<reference key="3">
    <citation type="journal article" date="2001" name="Science">
        <title>The composite genome of the legume symbiont Sinorhizobium meliloti.</title>
        <authorList>
            <person name="Galibert F."/>
            <person name="Finan T.M."/>
            <person name="Long S.R."/>
            <person name="Puehler A."/>
            <person name="Abola P."/>
            <person name="Ampe F."/>
            <person name="Barloy-Hubler F."/>
            <person name="Barnett M.J."/>
            <person name="Becker A."/>
            <person name="Boistard P."/>
            <person name="Bothe G."/>
            <person name="Boutry M."/>
            <person name="Bowser L."/>
            <person name="Buhrmester J."/>
            <person name="Cadieu E."/>
            <person name="Capela D."/>
            <person name="Chain P."/>
            <person name="Cowie A."/>
            <person name="Davis R.W."/>
            <person name="Dreano S."/>
            <person name="Federspiel N.A."/>
            <person name="Fisher R.F."/>
            <person name="Gloux S."/>
            <person name="Godrie T."/>
            <person name="Goffeau A."/>
            <person name="Golding B."/>
            <person name="Gouzy J."/>
            <person name="Gurjal M."/>
            <person name="Hernandez-Lucas I."/>
            <person name="Hong A."/>
            <person name="Huizar L."/>
            <person name="Hyman R.W."/>
            <person name="Jones T."/>
            <person name="Kahn D."/>
            <person name="Kahn M.L."/>
            <person name="Kalman S."/>
            <person name="Keating D.H."/>
            <person name="Kiss E."/>
            <person name="Komp C."/>
            <person name="Lelaure V."/>
            <person name="Masuy D."/>
            <person name="Palm C."/>
            <person name="Peck M.C."/>
            <person name="Pohl T.M."/>
            <person name="Portetelle D."/>
            <person name="Purnelle B."/>
            <person name="Ramsperger U."/>
            <person name="Surzycki R."/>
            <person name="Thebault P."/>
            <person name="Vandenbol M."/>
            <person name="Vorhoelter F.J."/>
            <person name="Weidner S."/>
            <person name="Wells D.H."/>
            <person name="Wong K."/>
            <person name="Yeh K.-C."/>
            <person name="Batut J."/>
        </authorList>
    </citation>
    <scope>NUCLEOTIDE SEQUENCE [LARGE SCALE GENOMIC DNA]</scope>
    <source>
        <strain>1021</strain>
    </source>
</reference>
<organism>
    <name type="scientific">Rhizobium meliloti (strain 1021)</name>
    <name type="common">Ensifer meliloti</name>
    <name type="synonym">Sinorhizobium meliloti</name>
    <dbReference type="NCBI Taxonomy" id="266834"/>
    <lineage>
        <taxon>Bacteria</taxon>
        <taxon>Pseudomonadati</taxon>
        <taxon>Pseudomonadota</taxon>
        <taxon>Alphaproteobacteria</taxon>
        <taxon>Hyphomicrobiales</taxon>
        <taxon>Rhizobiaceae</taxon>
        <taxon>Sinorhizobium/Ensifer group</taxon>
        <taxon>Sinorhizobium</taxon>
    </lineage>
</organism>
<sequence length="356" mass="38525">MPVNLKQLAELLGLSQTTVSRALNGYPEVNAETRARVLEAVRETGYRPNRAAQRLATGKAYSIGLVMPIAAGIDSDIHFGEFLAGLAEEAVEHDFHFVLNPSAPEDEEATFRRLAASGNVDAVFIAYMRANDPRIEMLKALSIPFVVHGRSIGGPRDYPFVDVDNTGAFYDAARLLIQLGHNRIALINGPEHLTFSIRRRKGLVRALAEKGLNLDDALVHHSAMTDEHGYRSMQRFLKRPAPPTAVLCSSTVLALGAVRAINQAGLAIGTDISLIAHDDVLPMLKPENFSVPLTTTRSSLRAAGARIAKRLIGGILNQGDYPEQELWRAELIVRASTGPAPDRSPLPNPSPQVGGA</sequence>